<evidence type="ECO:0000250" key="1"/>
<evidence type="ECO:0000255" key="2">
    <source>
        <dbReference type="HAMAP-Rule" id="MF_00403"/>
    </source>
</evidence>
<evidence type="ECO:0000305" key="3"/>
<geneLocation type="chloroplast"/>
<sequence>MPTIKQLIRNTRQPIKNVTKSPALRGCPQRKGTCTRVYTITPKKPNSALRKVARVRLTSGFEITAYIPGIGHNLQEHSVVLVRGGRVKDLPGVRYHIVRGTLDAVGVKDRQQGRSKYGVKKPK</sequence>
<feature type="chain" id="PRO_0000296071" description="Small ribosomal subunit protein uS12cz/uS12cy">
    <location>
        <begin position="1"/>
        <end position="123"/>
    </location>
</feature>
<keyword id="KW-0150">Chloroplast</keyword>
<keyword id="KW-0934">Plastid</keyword>
<keyword id="KW-0687">Ribonucleoprotein</keyword>
<keyword id="KW-0689">Ribosomal protein</keyword>
<keyword id="KW-0694">RNA-binding</keyword>
<keyword id="KW-0699">rRNA-binding</keyword>
<proteinExistence type="inferred from homology"/>
<organism>
    <name type="scientific">Nandina domestica</name>
    <name type="common">Heavenly bamboo</name>
    <dbReference type="NCBI Taxonomy" id="41776"/>
    <lineage>
        <taxon>Eukaryota</taxon>
        <taxon>Viridiplantae</taxon>
        <taxon>Streptophyta</taxon>
        <taxon>Embryophyta</taxon>
        <taxon>Tracheophyta</taxon>
        <taxon>Spermatophyta</taxon>
        <taxon>Magnoliopsida</taxon>
        <taxon>Ranunculales</taxon>
        <taxon>Berberidaceae</taxon>
        <taxon>Nandinoideae</taxon>
        <taxon>Nandineae</taxon>
        <taxon>Nandina</taxon>
    </lineage>
</organism>
<accession>Q09FT7</accession>
<protein>
    <recommendedName>
        <fullName evidence="2">Small ribosomal subunit protein uS12cz/uS12cy</fullName>
    </recommendedName>
    <alternativeName>
        <fullName evidence="3">30S ribosomal protein S12, chloroplastic</fullName>
    </alternativeName>
</protein>
<name>RR12_NANDO</name>
<reference key="1">
    <citation type="journal article" date="2006" name="BMC Plant Biol.">
        <title>Rapid and accurate pyrosequencing of angiosperm plastid genomes.</title>
        <authorList>
            <person name="Moore M.J."/>
            <person name="Dhingra A."/>
            <person name="Soltis P.S."/>
            <person name="Shaw R."/>
            <person name="Farmerie W.G."/>
            <person name="Folta K.M."/>
            <person name="Soltis D.E."/>
        </authorList>
    </citation>
    <scope>NUCLEOTIDE SEQUENCE [LARGE SCALE GENOMIC DNA]</scope>
</reference>
<gene>
    <name type="primary">rps12-A</name>
</gene>
<gene>
    <name type="primary">rps12-B</name>
</gene>
<comment type="function">
    <text evidence="1">With S4 and S5 plays an important role in translational accuracy. Located at the interface of the 30S and 50S subunits (By similarity).</text>
</comment>
<comment type="subunit">
    <text evidence="1">Part of the 30S ribosomal subunit.</text>
</comment>
<comment type="subcellular location">
    <subcellularLocation>
        <location>Plastid</location>
        <location>Chloroplast</location>
    </subcellularLocation>
</comment>
<comment type="similarity">
    <text evidence="3">Belongs to the universal ribosomal protein uS12 family.</text>
</comment>
<dbReference type="EMBL" id="DQ923117">
    <property type="protein sequence ID" value="ABI49887.1"/>
    <property type="molecule type" value="Genomic_DNA"/>
</dbReference>
<dbReference type="EMBL" id="DQ923117">
    <property type="protein sequence ID" value="ABI49888.1"/>
    <property type="molecule type" value="Genomic_DNA"/>
</dbReference>
<dbReference type="SMR" id="Q09FT7"/>
<dbReference type="GO" id="GO:0009507">
    <property type="term" value="C:chloroplast"/>
    <property type="evidence" value="ECO:0007669"/>
    <property type="project" value="UniProtKB-SubCell"/>
</dbReference>
<dbReference type="GO" id="GO:0015935">
    <property type="term" value="C:small ribosomal subunit"/>
    <property type="evidence" value="ECO:0007669"/>
    <property type="project" value="InterPro"/>
</dbReference>
<dbReference type="GO" id="GO:0019843">
    <property type="term" value="F:rRNA binding"/>
    <property type="evidence" value="ECO:0007669"/>
    <property type="project" value="UniProtKB-UniRule"/>
</dbReference>
<dbReference type="GO" id="GO:0003735">
    <property type="term" value="F:structural constituent of ribosome"/>
    <property type="evidence" value="ECO:0007669"/>
    <property type="project" value="InterPro"/>
</dbReference>
<dbReference type="GO" id="GO:0006412">
    <property type="term" value="P:translation"/>
    <property type="evidence" value="ECO:0007669"/>
    <property type="project" value="UniProtKB-UniRule"/>
</dbReference>
<dbReference type="CDD" id="cd03368">
    <property type="entry name" value="Ribosomal_S12"/>
    <property type="match status" value="1"/>
</dbReference>
<dbReference type="FunFam" id="2.40.50.140:FF:000008">
    <property type="entry name" value="30S ribosomal protein S12, chloroplastic"/>
    <property type="match status" value="1"/>
</dbReference>
<dbReference type="Gene3D" id="2.40.50.140">
    <property type="entry name" value="Nucleic acid-binding proteins"/>
    <property type="match status" value="1"/>
</dbReference>
<dbReference type="HAMAP" id="MF_00403_B">
    <property type="entry name" value="Ribosomal_uS12_B"/>
    <property type="match status" value="1"/>
</dbReference>
<dbReference type="InterPro" id="IPR012340">
    <property type="entry name" value="NA-bd_OB-fold"/>
</dbReference>
<dbReference type="InterPro" id="IPR006032">
    <property type="entry name" value="Ribosomal_uS12"/>
</dbReference>
<dbReference type="InterPro" id="IPR005679">
    <property type="entry name" value="Ribosomal_uS12_bac"/>
</dbReference>
<dbReference type="NCBIfam" id="TIGR00981">
    <property type="entry name" value="rpsL_bact"/>
    <property type="match status" value="1"/>
</dbReference>
<dbReference type="PANTHER" id="PTHR11652">
    <property type="entry name" value="30S RIBOSOMAL PROTEIN S12 FAMILY MEMBER"/>
    <property type="match status" value="1"/>
</dbReference>
<dbReference type="Pfam" id="PF00164">
    <property type="entry name" value="Ribosom_S12_S23"/>
    <property type="match status" value="1"/>
</dbReference>
<dbReference type="PIRSF" id="PIRSF002133">
    <property type="entry name" value="Ribosomal_S12/S23"/>
    <property type="match status" value="1"/>
</dbReference>
<dbReference type="PRINTS" id="PR01034">
    <property type="entry name" value="RIBOSOMALS12"/>
</dbReference>
<dbReference type="SUPFAM" id="SSF50249">
    <property type="entry name" value="Nucleic acid-binding proteins"/>
    <property type="match status" value="1"/>
</dbReference>
<dbReference type="PROSITE" id="PS00055">
    <property type="entry name" value="RIBOSOMAL_S12"/>
    <property type="match status" value="1"/>
</dbReference>